<comment type="similarity">
    <text evidence="2">Belongs to the SUA5 family.</text>
</comment>
<name>YCIO_ECOLI</name>
<reference key="1">
    <citation type="journal article" date="1996" name="DNA Res.">
        <title>A 570-kb DNA sequence of the Escherichia coli K-12 genome corresponding to the 28.0-40.1 min region on the linkage map.</title>
        <authorList>
            <person name="Aiba H."/>
            <person name="Baba T."/>
            <person name="Fujita K."/>
            <person name="Hayashi K."/>
            <person name="Inada T."/>
            <person name="Isono K."/>
            <person name="Itoh T."/>
            <person name="Kasai H."/>
            <person name="Kashimoto K."/>
            <person name="Kimura S."/>
            <person name="Kitakawa M."/>
            <person name="Kitagawa M."/>
            <person name="Makino K."/>
            <person name="Miki T."/>
            <person name="Mizobuchi K."/>
            <person name="Mori H."/>
            <person name="Mori T."/>
            <person name="Motomura K."/>
            <person name="Nakade S."/>
            <person name="Nakamura Y."/>
            <person name="Nashimoto H."/>
            <person name="Nishio Y."/>
            <person name="Oshima T."/>
            <person name="Saito N."/>
            <person name="Sampei G."/>
            <person name="Seki Y."/>
            <person name="Sivasundaram S."/>
            <person name="Tagami H."/>
            <person name="Takeda J."/>
            <person name="Takemoto K."/>
            <person name="Takeuchi Y."/>
            <person name="Wada C."/>
            <person name="Yamamoto Y."/>
            <person name="Horiuchi T."/>
        </authorList>
    </citation>
    <scope>NUCLEOTIDE SEQUENCE [LARGE SCALE GENOMIC DNA]</scope>
    <source>
        <strain>K12 / W3110 / ATCC 27325 / DSM 5911</strain>
    </source>
</reference>
<reference key="2">
    <citation type="journal article" date="1997" name="Science">
        <title>The complete genome sequence of Escherichia coli K-12.</title>
        <authorList>
            <person name="Blattner F.R."/>
            <person name="Plunkett G. III"/>
            <person name="Bloch C.A."/>
            <person name="Perna N.T."/>
            <person name="Burland V."/>
            <person name="Riley M."/>
            <person name="Collado-Vides J."/>
            <person name="Glasner J.D."/>
            <person name="Rode C.K."/>
            <person name="Mayhew G.F."/>
            <person name="Gregor J."/>
            <person name="Davis N.W."/>
            <person name="Kirkpatrick H.A."/>
            <person name="Goeden M.A."/>
            <person name="Rose D.J."/>
            <person name="Mau B."/>
            <person name="Shao Y."/>
        </authorList>
    </citation>
    <scope>NUCLEOTIDE SEQUENCE [LARGE SCALE GENOMIC DNA]</scope>
    <source>
        <strain>K12 / MG1655 / ATCC 47076</strain>
    </source>
</reference>
<reference key="3">
    <citation type="journal article" date="2006" name="Mol. Syst. Biol.">
        <title>Highly accurate genome sequences of Escherichia coli K-12 strains MG1655 and W3110.</title>
        <authorList>
            <person name="Hayashi K."/>
            <person name="Morooka N."/>
            <person name="Yamamoto Y."/>
            <person name="Fujita K."/>
            <person name="Isono K."/>
            <person name="Choi S."/>
            <person name="Ohtsubo E."/>
            <person name="Baba T."/>
            <person name="Wanner B.L."/>
            <person name="Mori H."/>
            <person name="Horiuchi T."/>
        </authorList>
    </citation>
    <scope>NUCLEOTIDE SEQUENCE [LARGE SCALE GENOMIC DNA]</scope>
    <source>
        <strain>K12 / W3110 / ATCC 27325 / DSM 5911</strain>
    </source>
</reference>
<reference key="4">
    <citation type="journal article" date="1984" name="Bioorg. Khim.">
        <title>Primary structure of the E. coli DNA region preceding the tryptophan operon genes.</title>
        <authorList>
            <person name="Gubanov V.V."/>
            <person name="Lebedev I.B."/>
            <person name="Monastyrskaia G.S."/>
            <person name="Rubtsov P.M."/>
            <person name="Skriabin K.G."/>
        </authorList>
    </citation>
    <scope>NUCLEOTIDE SEQUENCE [GENOMIC DNA] OF 1-53</scope>
</reference>
<reference key="5">
    <citation type="submission" date="1994-12" db="EMBL/GenBank/DDBJ databases">
        <authorList>
            <person name="Milkman R."/>
            <person name="McKane M."/>
        </authorList>
    </citation>
    <scope>NUCLEOTIDE SEQUENCE [GENOMIC DNA] OF 24-206</scope>
    <source>
        <strain>K12 / W3110 / ATCC 27325 / DSM 5911</strain>
    </source>
</reference>
<reference key="6">
    <citation type="journal article" date="1999" name="Electrophoresis">
        <title>Enrichment of low abundance proteins of Escherichia coli by hydroxyapatite chromatography.</title>
        <authorList>
            <person name="Fountoulakis M."/>
            <person name="Takacs M.-F."/>
            <person name="Berndt P."/>
            <person name="Langen H."/>
            <person name="Takacs B."/>
        </authorList>
    </citation>
    <scope>IDENTIFICATION BY MASS SPECTROMETRY</scope>
    <source>
        <strain>B / BL21</strain>
    </source>
</reference>
<reference key="7">
    <citation type="submission" date="2001-10" db="PDB data bank">
        <title>Structural Genomics, protein TF1.</title>
        <authorList>
            <consortium name="Midwest center for structural genomics (MCSG)"/>
            <person name="Zhang R."/>
            <person name="Dementieva I."/>
            <person name="Thorn J."/>
            <person name="Donnelly M."/>
            <person name="Joachimiak A."/>
        </authorList>
    </citation>
    <scope>X-RAY CRYSTALLOGRAPHY (1.40 ANGSTROMS)</scope>
</reference>
<reference key="8">
    <citation type="journal article" date="2002" name="Proteins">
        <title>Crystal structure of the YciO protein from Escherichia coli.</title>
        <authorList>
            <person name="Jia J."/>
            <person name="Lunin V.V."/>
            <person name="Sauve V."/>
            <person name="Huang L.W."/>
            <person name="Matte A."/>
            <person name="Cygler M."/>
        </authorList>
    </citation>
    <scope>X-RAY CRYSTALLOGRAPHY (2.10 ANGSTROMS)</scope>
</reference>
<protein>
    <recommendedName>
        <fullName>Uncharacterized protein YciO</fullName>
    </recommendedName>
</protein>
<gene>
    <name type="primary">yciO</name>
    <name type="ordered locus">b1267</name>
    <name type="ordered locus">JW5196</name>
</gene>
<dbReference type="EMBL" id="U00096">
    <property type="protein sequence ID" value="AAC74349.2"/>
    <property type="molecule type" value="Genomic_DNA"/>
</dbReference>
<dbReference type="EMBL" id="AP009048">
    <property type="protein sequence ID" value="BAA14801.2"/>
    <property type="molecule type" value="Genomic_DNA"/>
</dbReference>
<dbReference type="EMBL" id="M38366">
    <property type="status" value="NOT_ANNOTATED_CDS"/>
    <property type="molecule type" value="Genomic_DNA"/>
</dbReference>
<dbReference type="EMBL" id="U18111">
    <property type="protein sequence ID" value="AAB59987.1"/>
    <property type="molecule type" value="Genomic_DNA"/>
</dbReference>
<dbReference type="RefSeq" id="NP_415783.6">
    <property type="nucleotide sequence ID" value="NC_000913.3"/>
</dbReference>
<dbReference type="RefSeq" id="WP_001295575.1">
    <property type="nucleotide sequence ID" value="NZ_STEB01000005.1"/>
</dbReference>
<dbReference type="PDB" id="1K7J">
    <property type="method" value="X-ray"/>
    <property type="resolution" value="1.40 A"/>
    <property type="chains" value="A=1-206"/>
</dbReference>
<dbReference type="PDB" id="1KK9">
    <property type="method" value="X-ray"/>
    <property type="resolution" value="2.10 A"/>
    <property type="chains" value="A=1-206"/>
</dbReference>
<dbReference type="PDBsum" id="1K7J"/>
<dbReference type="PDBsum" id="1KK9"/>
<dbReference type="SMR" id="P0AFR4"/>
<dbReference type="BioGRID" id="4260126">
    <property type="interactions" value="31"/>
</dbReference>
<dbReference type="FunCoup" id="P0AFR4">
    <property type="interactions" value="636"/>
</dbReference>
<dbReference type="STRING" id="511145.b1267"/>
<dbReference type="jPOST" id="P0AFR4"/>
<dbReference type="PaxDb" id="511145-b1267"/>
<dbReference type="EnsemblBacteria" id="AAC74349">
    <property type="protein sequence ID" value="AAC74349"/>
    <property type="gene ID" value="b1267"/>
</dbReference>
<dbReference type="GeneID" id="945854"/>
<dbReference type="KEGG" id="ecj:JW5196"/>
<dbReference type="KEGG" id="eco:b1267"/>
<dbReference type="KEGG" id="ecoc:C3026_07425"/>
<dbReference type="PATRIC" id="fig|1411691.4.peg.1017"/>
<dbReference type="EchoBASE" id="EB2796"/>
<dbReference type="eggNOG" id="COG0009">
    <property type="taxonomic scope" value="Bacteria"/>
</dbReference>
<dbReference type="HOGENOM" id="CLU_031397_3_0_6"/>
<dbReference type="InParanoid" id="P0AFR4"/>
<dbReference type="OMA" id="YALGCQI"/>
<dbReference type="OrthoDB" id="9781656at2"/>
<dbReference type="PhylomeDB" id="P0AFR4"/>
<dbReference type="BioCyc" id="EcoCyc:G6635-MONOMER"/>
<dbReference type="EvolutionaryTrace" id="P0AFR4"/>
<dbReference type="PRO" id="PR:P0AFR4"/>
<dbReference type="Proteomes" id="UP000000625">
    <property type="component" value="Chromosome"/>
</dbReference>
<dbReference type="GO" id="GO:0005829">
    <property type="term" value="C:cytosol"/>
    <property type="evidence" value="ECO:0000314"/>
    <property type="project" value="EcoCyc"/>
</dbReference>
<dbReference type="GO" id="GO:0003725">
    <property type="term" value="F:double-stranded RNA binding"/>
    <property type="evidence" value="ECO:0007669"/>
    <property type="project" value="InterPro"/>
</dbReference>
<dbReference type="FunFam" id="3.90.870.10:FF:000003">
    <property type="entry name" value="Sua5/YciO/YrdC/YwlC family protein"/>
    <property type="match status" value="1"/>
</dbReference>
<dbReference type="Gene3D" id="3.90.870.10">
    <property type="entry name" value="DHBP synthase"/>
    <property type="match status" value="1"/>
</dbReference>
<dbReference type="InterPro" id="IPR017945">
    <property type="entry name" value="DHBP_synth_RibB-like_a/b_dom"/>
</dbReference>
<dbReference type="InterPro" id="IPR006070">
    <property type="entry name" value="Sua5-like_dom"/>
</dbReference>
<dbReference type="InterPro" id="IPR052532">
    <property type="entry name" value="SUA5_domain"/>
</dbReference>
<dbReference type="NCBIfam" id="TIGR00057">
    <property type="entry name" value="L-threonylcarbamoyladenylate synthase"/>
    <property type="match status" value="1"/>
</dbReference>
<dbReference type="PANTHER" id="PTHR42828">
    <property type="entry name" value="DHBP SYNTHASE RIBB-LIKE ALPHA/BETA DOMAIN-CONTAINING PROTEIN"/>
    <property type="match status" value="1"/>
</dbReference>
<dbReference type="PANTHER" id="PTHR42828:SF3">
    <property type="entry name" value="THREONYLCARBAMOYL-AMP SYNTHASE"/>
    <property type="match status" value="1"/>
</dbReference>
<dbReference type="Pfam" id="PF01300">
    <property type="entry name" value="Sua5_yciO_yrdC"/>
    <property type="match status" value="1"/>
</dbReference>
<dbReference type="SUPFAM" id="SSF55821">
    <property type="entry name" value="YrdC/RibB"/>
    <property type="match status" value="1"/>
</dbReference>
<dbReference type="PROSITE" id="PS51163">
    <property type="entry name" value="YRDC"/>
    <property type="match status" value="1"/>
</dbReference>
<keyword id="KW-0002">3D-structure</keyword>
<keyword id="KW-1185">Reference proteome</keyword>
<evidence type="ECO:0000255" key="1">
    <source>
        <dbReference type="PROSITE-ProRule" id="PRU00518"/>
    </source>
</evidence>
<evidence type="ECO:0000305" key="2"/>
<evidence type="ECO:0007829" key="3">
    <source>
        <dbReference type="PDB" id="1K7J"/>
    </source>
</evidence>
<sequence>MSQFFYIHPDNPQQRLINQAVEIVRKGGVIVYPTDSGYALGCKIEDKNAMERICRIRQLPDGHNFTLMCRDLSELSTYSFVDNVAFRLMKNNTPGNYTFILKGTKEVPRRLLQEKRKTIGMRVPSNPIAQALLEALGEPMLSTSLMLPGSEFTESDPEEIKDRLEKQVDLIIHGGYLGQKPTTVIDLTDDTPVVVREGVGDVKPFL</sequence>
<proteinExistence type="evidence at protein level"/>
<organism>
    <name type="scientific">Escherichia coli (strain K12)</name>
    <dbReference type="NCBI Taxonomy" id="83333"/>
    <lineage>
        <taxon>Bacteria</taxon>
        <taxon>Pseudomonadati</taxon>
        <taxon>Pseudomonadota</taxon>
        <taxon>Gammaproteobacteria</taxon>
        <taxon>Enterobacterales</taxon>
        <taxon>Enterobacteriaceae</taxon>
        <taxon>Escherichia</taxon>
    </lineage>
</organism>
<accession>P0AFR4</accession>
<accession>P45847</accession>
<feature type="chain" id="PRO_0000202014" description="Uncharacterized protein YciO">
    <location>
        <begin position="1"/>
        <end position="206"/>
    </location>
</feature>
<feature type="domain" description="YrdC-like" evidence="1">
    <location>
        <begin position="14"/>
        <end position="200"/>
    </location>
</feature>
<feature type="strand" evidence="3">
    <location>
        <begin position="3"/>
        <end position="6"/>
    </location>
</feature>
<feature type="strand" evidence="3">
    <location>
        <begin position="9"/>
        <end position="11"/>
    </location>
</feature>
<feature type="helix" evidence="3">
    <location>
        <begin position="14"/>
        <end position="25"/>
    </location>
</feature>
<feature type="strand" evidence="3">
    <location>
        <begin position="30"/>
        <end position="34"/>
    </location>
</feature>
<feature type="strand" evidence="3">
    <location>
        <begin position="37"/>
        <end position="43"/>
    </location>
</feature>
<feature type="helix" evidence="3">
    <location>
        <begin position="47"/>
        <end position="57"/>
    </location>
</feature>
<feature type="strand" evidence="3">
    <location>
        <begin position="66"/>
        <end position="68"/>
    </location>
</feature>
<feature type="helix" evidence="3">
    <location>
        <begin position="72"/>
        <end position="78"/>
    </location>
</feature>
<feature type="helix" evidence="3">
    <location>
        <begin position="83"/>
        <end position="90"/>
    </location>
</feature>
<feature type="strand" evidence="3">
    <location>
        <begin position="94"/>
        <end position="103"/>
    </location>
</feature>
<feature type="helix" evidence="3">
    <location>
        <begin position="109"/>
        <end position="111"/>
    </location>
</feature>
<feature type="turn" evidence="3">
    <location>
        <begin position="114"/>
        <end position="116"/>
    </location>
</feature>
<feature type="strand" evidence="3">
    <location>
        <begin position="118"/>
        <end position="122"/>
    </location>
</feature>
<feature type="helix" evidence="3">
    <location>
        <begin position="127"/>
        <end position="136"/>
    </location>
</feature>
<feature type="strand" evidence="3">
    <location>
        <begin position="140"/>
        <end position="144"/>
    </location>
</feature>
<feature type="strand" evidence="3">
    <location>
        <begin position="151"/>
        <end position="153"/>
    </location>
</feature>
<feature type="helix" evidence="3">
    <location>
        <begin position="157"/>
        <end position="164"/>
    </location>
</feature>
<feature type="turn" evidence="3">
    <location>
        <begin position="165"/>
        <end position="167"/>
    </location>
</feature>
<feature type="strand" evidence="3">
    <location>
        <begin position="169"/>
        <end position="173"/>
    </location>
</feature>
<feature type="strand" evidence="3">
    <location>
        <begin position="183"/>
        <end position="186"/>
    </location>
</feature>
<feature type="helix" evidence="3">
    <location>
        <begin position="188"/>
        <end position="190"/>
    </location>
</feature>
<feature type="strand" evidence="3">
    <location>
        <begin position="193"/>
        <end position="196"/>
    </location>
</feature>
<feature type="helix" evidence="3">
    <location>
        <begin position="203"/>
        <end position="205"/>
    </location>
</feature>